<comment type="function">
    <text>Highly selective inward-rectifying potassium channel. This voltage-dependent channel could mediate long-term potassium influx into guard cells leading to stomatal opening. Assuming opened or closed conformations in response to the voltage difference across the membrane, the channel is activated by hyperpolarization. The channel activity is enhanced upon external acidification.</text>
</comment>
<comment type="subunit">
    <text evidence="3 4">The potassium channel is probably composed of a homo- or heterotetrameric complex of pore-forming subunits. May interact with KAT1 (Probable). Interacts with SLAC1 (PubMed:27002025).</text>
</comment>
<comment type="interaction">
    <interactant intactId="EBI-2117720">
        <id>Q38849</id>
    </interactant>
    <interactant intactId="EBI-1552774">
        <id>Q38898</id>
        <label>AKT2</label>
    </interactant>
    <organismsDiffer>false</organismsDiffer>
    <experiments>3</experiments>
</comment>
<comment type="interaction">
    <interactant intactId="EBI-2117720">
        <id>Q38849</id>
    </interactant>
    <interactant intactId="EBI-1552490">
        <id>Q39128</id>
        <label>KAT1</label>
    </interactant>
    <organismsDiffer>false</organismsDiffer>
    <experiments>3</experiments>
</comment>
<comment type="subcellular location">
    <subcellularLocation>
        <location>Membrane</location>
        <topology>Multi-pass membrane protein</topology>
    </subcellularLocation>
</comment>
<comment type="tissue specificity">
    <text>Expressed in guard cells of hypocotyls, stems leaves and petioles. Detected also in the phloem of minor veins and in flower at a lower level.</text>
</comment>
<comment type="domain">
    <text>The segment S4 is probably the voltage-sensor and is characterized by a series of positively charged amino acids. The pore-forming region H5 is enclosed by the transmembrane segments S5 and S6 in the Shaker-type (1P/6TM) and contains the GYGD signature motif which seems to be involved in potassium selectivity.</text>
</comment>
<comment type="domain">
    <text>The KHA domain (rich in hydrophobic and acidic residues) present in the C-terminal part is likely to be important for tetramerization.</text>
</comment>
<comment type="similarity">
    <text evidence="4">Belongs to the potassium channel family. Plant (TC 1.A.1.4) subfamily.</text>
</comment>
<comment type="sequence caution" evidence="4">
    <conflict type="erroneous initiation">
        <sequence resource="EMBL-CDS" id="CAC28122"/>
    </conflict>
    <text>Extended N-terminus.</text>
</comment>
<name>KAT2_ARATH</name>
<accession>Q38849</accession>
<accession>O49732</accession>
<accession>Q9C5V9</accession>
<feature type="chain" id="PRO_0000054126" description="Potassium channel KAT2">
    <location>
        <begin position="1"/>
        <end position="697"/>
    </location>
</feature>
<feature type="topological domain" description="Cytoplasmic" evidence="1">
    <location>
        <begin position="1"/>
        <end position="63"/>
    </location>
</feature>
<feature type="transmembrane region" description="Helical; Name=Segment S1" evidence="1">
    <location>
        <begin position="64"/>
        <end position="84"/>
    </location>
</feature>
<feature type="topological domain" description="Extracellular" evidence="1">
    <location>
        <begin position="85"/>
        <end position="91"/>
    </location>
</feature>
<feature type="transmembrane region" description="Helical; Name=Segment S2" evidence="1">
    <location>
        <begin position="92"/>
        <end position="112"/>
    </location>
</feature>
<feature type="topological domain" description="Cytoplasmic" evidence="1">
    <location>
        <begin position="113"/>
        <end position="134"/>
    </location>
</feature>
<feature type="transmembrane region" description="Helical; Name=Segment S3" evidence="1">
    <location>
        <begin position="135"/>
        <end position="155"/>
    </location>
</feature>
<feature type="topological domain" description="Extracellular" evidence="1">
    <location>
        <begin position="156"/>
        <end position="165"/>
    </location>
</feature>
<feature type="transmembrane region" description="Helical; Voltage-sensor; Name=Segment S4" evidence="1">
    <location>
        <begin position="166"/>
        <end position="186"/>
    </location>
</feature>
<feature type="topological domain" description="Cytoplasmic" evidence="1">
    <location>
        <begin position="187"/>
        <end position="200"/>
    </location>
</feature>
<feature type="transmembrane region" description="Helical; Name=Segment S5" evidence="1">
    <location>
        <begin position="201"/>
        <end position="221"/>
    </location>
</feature>
<feature type="topological domain" description="Extracellular" evidence="1">
    <location>
        <begin position="222"/>
        <end position="248"/>
    </location>
</feature>
<feature type="intramembrane region" description="Pore-forming; Name=Segment H5" evidence="1">
    <location>
        <begin position="249"/>
        <end position="268"/>
    </location>
</feature>
<feature type="topological domain" description="Extracellular" evidence="1">
    <location>
        <begin position="269"/>
        <end position="272"/>
    </location>
</feature>
<feature type="transmembrane region" description="Helical; Name=Segment S6" evidence="1">
    <location>
        <begin position="273"/>
        <end position="293"/>
    </location>
</feature>
<feature type="topological domain" description="Cytoplasmic" evidence="1">
    <location>
        <begin position="294"/>
        <end position="697"/>
    </location>
</feature>
<feature type="domain" description="KHA" evidence="2">
    <location>
        <begin position="629"/>
        <end position="697"/>
    </location>
</feature>
<feature type="binding site">
    <location>
        <begin position="377"/>
        <end position="496"/>
    </location>
    <ligand>
        <name>a nucleoside 3',5'-cyclic phosphate</name>
        <dbReference type="ChEBI" id="CHEBI:58464"/>
    </ligand>
</feature>
<feature type="glycosylation site" description="N-linked (GlcNAc...) asparagine" evidence="1">
    <location>
        <position position="158"/>
    </location>
</feature>
<feature type="sequence conflict" description="In Ref. 4; AAA67070." evidence="4" ref="4">
    <original>A</original>
    <variation>R</variation>
    <location>
        <position position="358"/>
    </location>
</feature>
<feature type="sequence conflict" description="In Ref. 4; AAA67070." evidence="4" ref="4">
    <original>R</original>
    <variation>S</variation>
    <location>
        <position position="612"/>
    </location>
</feature>
<evidence type="ECO:0000255" key="1"/>
<evidence type="ECO:0000255" key="2">
    <source>
        <dbReference type="PROSITE-ProRule" id="PRU00823"/>
    </source>
</evidence>
<evidence type="ECO:0000269" key="3">
    <source>
    </source>
</evidence>
<evidence type="ECO:0000305" key="4"/>
<keyword id="KW-0325">Glycoprotein</keyword>
<keyword id="KW-0407">Ion channel</keyword>
<keyword id="KW-0406">Ion transport</keyword>
<keyword id="KW-0472">Membrane</keyword>
<keyword id="KW-0630">Potassium</keyword>
<keyword id="KW-0631">Potassium channel</keyword>
<keyword id="KW-0633">Potassium transport</keyword>
<keyword id="KW-1185">Reference proteome</keyword>
<keyword id="KW-0812">Transmembrane</keyword>
<keyword id="KW-1133">Transmembrane helix</keyword>
<keyword id="KW-0813">Transport</keyword>
<keyword id="KW-0851">Voltage-gated channel</keyword>
<sequence>MSISCTRNFFKRFCVEEYNMDTFKHSSFLSADLLPSLGARINQSTKLRKHIISPFDPRFRGWEMWLVILVIYSAWICPFEFAFITYKKDALFIIDNIVNGFFAIDIILTFFVAYLDSHSYLLVDKPKKIAIRYLSTWFAFDVCSTAPFQSLSLLFKYNGSEIGFRVLSMLRLWRLRRVSSLFARLEKDIRFNYFWTRCTKLISVTLFAVHCAGCFAYLIADQYHDPTKTWIGAVYPNFKETSVWSRYVTALYWSITTLTTTGYGDLHAENPREMLFFVFFMLFNLGFTSYLIGNMTNLVVHWTSRTRNFRDTVRAASEFASRNQLPPNIQDQMLSHICLKFKTEGLKQQEALNGLPKAIRSSIANYLFFPIVQNVYLFHGVSRNFLFQLVSDIDAEYFPPREDVILQNEAPTDLYILVSGAVDFTVYVGEEDQVQGKAVVGDAFGEIGVLCYTPQPFTVRTTELSQILRISKKSLMSAMRAHVEDGRVIMNNLFMKLRGQQSIAIDDPNSEPESLLKEWLVGGSKTGEGNASDQGHGHKYLQLHDSENIDMGSTEWRDSRRSGYGETKRVREHTIEIEEGEKPNKEFDGKGCSDADLTSFEFHSQEAYPYCRSNIQIKQHEAAKPKDKRVTIHLKSRDKDLSKLIILPASIEELLRLAGEKFGYSFTKVTNAENAEIDDEDVIRDGDHLYILINENS</sequence>
<dbReference type="EMBL" id="AJ288900">
    <property type="protein sequence ID" value="CAC28122.1"/>
    <property type="status" value="ALT_INIT"/>
    <property type="molecule type" value="Genomic_DNA"/>
</dbReference>
<dbReference type="EMBL" id="AL021713">
    <property type="protein sequence ID" value="CAA16801.1"/>
    <property type="molecule type" value="Genomic_DNA"/>
</dbReference>
<dbReference type="EMBL" id="AL161548">
    <property type="protein sequence ID" value="CAB78831.1"/>
    <property type="molecule type" value="Genomic_DNA"/>
</dbReference>
<dbReference type="EMBL" id="CP002687">
    <property type="protein sequence ID" value="AEE84021.1"/>
    <property type="molecule type" value="Genomic_DNA"/>
</dbReference>
<dbReference type="EMBL" id="U25694">
    <property type="protein sequence ID" value="AAA67070.1"/>
    <property type="molecule type" value="mRNA"/>
</dbReference>
<dbReference type="PIR" id="H85205">
    <property type="entry name" value="H85205"/>
</dbReference>
<dbReference type="PIR" id="T04931">
    <property type="entry name" value="T04931"/>
</dbReference>
<dbReference type="RefSeq" id="NP_001329801.1">
    <property type="nucleotide sequence ID" value="NM_001341273.1"/>
</dbReference>
<dbReference type="RefSeq" id="NP_193563.3">
    <property type="nucleotide sequence ID" value="NM_117939.5"/>
</dbReference>
<dbReference type="SMR" id="Q38849"/>
<dbReference type="BioGRID" id="12848">
    <property type="interactions" value="3"/>
</dbReference>
<dbReference type="FunCoup" id="Q38849">
    <property type="interactions" value="115"/>
</dbReference>
<dbReference type="IntAct" id="Q38849">
    <property type="interactions" value="2"/>
</dbReference>
<dbReference type="STRING" id="3702.Q38849"/>
<dbReference type="TCDB" id="1.A.1.4.6">
    <property type="family name" value="the voltage-gated ion channel (vic) superfamily"/>
</dbReference>
<dbReference type="GlyCosmos" id="Q38849">
    <property type="glycosylation" value="1 site, No reported glycans"/>
</dbReference>
<dbReference type="GlyGen" id="Q38849">
    <property type="glycosylation" value="1 site"/>
</dbReference>
<dbReference type="iPTMnet" id="Q38849"/>
<dbReference type="PaxDb" id="3702-AT4G18290.1"/>
<dbReference type="ProteomicsDB" id="232243"/>
<dbReference type="EnsemblPlants" id="AT4G18290.1">
    <property type="protein sequence ID" value="AT4G18290.1"/>
    <property type="gene ID" value="AT4G18290"/>
</dbReference>
<dbReference type="GeneID" id="827555"/>
<dbReference type="Gramene" id="AT4G18290.1">
    <property type="protein sequence ID" value="AT4G18290.1"/>
    <property type="gene ID" value="AT4G18290"/>
</dbReference>
<dbReference type="KEGG" id="ath:AT4G18290"/>
<dbReference type="Araport" id="AT4G18290"/>
<dbReference type="TAIR" id="AT4G18290">
    <property type="gene designation" value="KAT2"/>
</dbReference>
<dbReference type="eggNOG" id="KOG0498">
    <property type="taxonomic scope" value="Eukaryota"/>
</dbReference>
<dbReference type="HOGENOM" id="CLU_005746_8_2_1"/>
<dbReference type="InParanoid" id="Q38849"/>
<dbReference type="OMA" id="YFGLDYP"/>
<dbReference type="PRO" id="PR:Q38849"/>
<dbReference type="Proteomes" id="UP000006548">
    <property type="component" value="Chromosome 4"/>
</dbReference>
<dbReference type="ExpressionAtlas" id="Q38849">
    <property type="expression patterns" value="baseline and differential"/>
</dbReference>
<dbReference type="GO" id="GO:0034702">
    <property type="term" value="C:monoatomic ion channel complex"/>
    <property type="evidence" value="ECO:0007669"/>
    <property type="project" value="UniProtKB-KW"/>
</dbReference>
<dbReference type="GO" id="GO:0005249">
    <property type="term" value="F:voltage-gated potassium channel activity"/>
    <property type="evidence" value="ECO:0007669"/>
    <property type="project" value="InterPro"/>
</dbReference>
<dbReference type="GO" id="GO:0007623">
    <property type="term" value="P:circadian rhythm"/>
    <property type="evidence" value="ECO:0000315"/>
    <property type="project" value="TAIR"/>
</dbReference>
<dbReference type="GO" id="GO:0009644">
    <property type="term" value="P:response to high light intensity"/>
    <property type="evidence" value="ECO:0000315"/>
    <property type="project" value="TAIR"/>
</dbReference>
<dbReference type="GO" id="GO:0010118">
    <property type="term" value="P:stomatal movement"/>
    <property type="evidence" value="ECO:0000315"/>
    <property type="project" value="TAIR"/>
</dbReference>
<dbReference type="CDD" id="cd00038">
    <property type="entry name" value="CAP_ED"/>
    <property type="match status" value="1"/>
</dbReference>
<dbReference type="FunFam" id="2.60.120.10:FF:000074">
    <property type="entry name" value="Potassium channel KAT2"/>
    <property type="match status" value="1"/>
</dbReference>
<dbReference type="FunFam" id="1.10.287.70:FF:000123">
    <property type="entry name" value="Potassium channel KAT3"/>
    <property type="match status" value="1"/>
</dbReference>
<dbReference type="Gene3D" id="1.10.287.70">
    <property type="match status" value="1"/>
</dbReference>
<dbReference type="Gene3D" id="1.10.287.630">
    <property type="entry name" value="Helix hairpin bin"/>
    <property type="match status" value="1"/>
</dbReference>
<dbReference type="Gene3D" id="2.60.120.10">
    <property type="entry name" value="Jelly Rolls"/>
    <property type="match status" value="1"/>
</dbReference>
<dbReference type="InterPro" id="IPR000595">
    <property type="entry name" value="cNMP-bd_dom"/>
</dbReference>
<dbReference type="InterPro" id="IPR018490">
    <property type="entry name" value="cNMP-bd_dom_sf"/>
</dbReference>
<dbReference type="InterPro" id="IPR005821">
    <property type="entry name" value="Ion_trans_dom"/>
</dbReference>
<dbReference type="InterPro" id="IPR003938">
    <property type="entry name" value="K_chnl_volt-dep_EAG/ELK/ERG"/>
</dbReference>
<dbReference type="InterPro" id="IPR045319">
    <property type="entry name" value="KAT/AKT"/>
</dbReference>
<dbReference type="InterPro" id="IPR021789">
    <property type="entry name" value="KHA_dom"/>
</dbReference>
<dbReference type="InterPro" id="IPR014710">
    <property type="entry name" value="RmlC-like_jellyroll"/>
</dbReference>
<dbReference type="PANTHER" id="PTHR45743">
    <property type="entry name" value="POTASSIUM CHANNEL AKT1"/>
    <property type="match status" value="1"/>
</dbReference>
<dbReference type="PANTHER" id="PTHR45743:SF6">
    <property type="entry name" value="POTASSIUM CHANNEL KAT2"/>
    <property type="match status" value="1"/>
</dbReference>
<dbReference type="Pfam" id="PF00027">
    <property type="entry name" value="cNMP_binding"/>
    <property type="match status" value="1"/>
</dbReference>
<dbReference type="Pfam" id="PF00520">
    <property type="entry name" value="Ion_trans"/>
    <property type="match status" value="1"/>
</dbReference>
<dbReference type="Pfam" id="PF11834">
    <property type="entry name" value="KHA"/>
    <property type="match status" value="1"/>
</dbReference>
<dbReference type="PRINTS" id="PR01463">
    <property type="entry name" value="EAGCHANLFMLY"/>
</dbReference>
<dbReference type="SMART" id="SM00100">
    <property type="entry name" value="cNMP"/>
    <property type="match status" value="1"/>
</dbReference>
<dbReference type="SUPFAM" id="SSF51206">
    <property type="entry name" value="cAMP-binding domain-like"/>
    <property type="match status" value="1"/>
</dbReference>
<dbReference type="SUPFAM" id="SSF81324">
    <property type="entry name" value="Voltage-gated potassium channels"/>
    <property type="match status" value="1"/>
</dbReference>
<dbReference type="PROSITE" id="PS50042">
    <property type="entry name" value="CNMP_BINDING_3"/>
    <property type="match status" value="1"/>
</dbReference>
<dbReference type="PROSITE" id="PS51490">
    <property type="entry name" value="KHA"/>
    <property type="match status" value="1"/>
</dbReference>
<gene>
    <name type="primary">KAT2</name>
    <name type="ordered locus">At4g18290</name>
    <name type="ORF">T9A21.140</name>
</gene>
<organism>
    <name type="scientific">Arabidopsis thaliana</name>
    <name type="common">Mouse-ear cress</name>
    <dbReference type="NCBI Taxonomy" id="3702"/>
    <lineage>
        <taxon>Eukaryota</taxon>
        <taxon>Viridiplantae</taxon>
        <taxon>Streptophyta</taxon>
        <taxon>Embryophyta</taxon>
        <taxon>Tracheophyta</taxon>
        <taxon>Spermatophyta</taxon>
        <taxon>Magnoliopsida</taxon>
        <taxon>eudicotyledons</taxon>
        <taxon>Gunneridae</taxon>
        <taxon>Pentapetalae</taxon>
        <taxon>rosids</taxon>
        <taxon>malvids</taxon>
        <taxon>Brassicales</taxon>
        <taxon>Brassicaceae</taxon>
        <taxon>Camelineae</taxon>
        <taxon>Arabidopsis</taxon>
    </lineage>
</organism>
<protein>
    <recommendedName>
        <fullName>Potassium channel KAT2</fullName>
    </recommendedName>
</protein>
<proteinExistence type="evidence at protein level"/>
<reference key="1">
    <citation type="journal article" date="2001" name="J. Biol. Chem.">
        <title>Guard cell inward K+ channel activity in Arabidopsis involves expression of the twin channel subunits KAT1 and KAT2.</title>
        <authorList>
            <person name="Pilot G."/>
            <person name="Lacombe B."/>
            <person name="Gaymard F."/>
            <person name="Cherel I."/>
            <person name="Boucherez J."/>
            <person name="Thibaud J.-B."/>
            <person name="Sentenac H."/>
        </authorList>
    </citation>
    <scope>NUCLEOTIDE SEQUENCE [GENOMIC DNA]</scope>
    <scope>CHARACTERIZATION</scope>
    <scope>INTERACTION WITH KAT1</scope>
    <source>
        <strain>cv. Columbia</strain>
    </source>
</reference>
<reference key="2">
    <citation type="journal article" date="1999" name="Nature">
        <title>Sequence and analysis of chromosome 4 of the plant Arabidopsis thaliana.</title>
        <authorList>
            <person name="Mayer K.F.X."/>
            <person name="Schueller C."/>
            <person name="Wambutt R."/>
            <person name="Murphy G."/>
            <person name="Volckaert G."/>
            <person name="Pohl T."/>
            <person name="Duesterhoeft A."/>
            <person name="Stiekema W."/>
            <person name="Entian K.-D."/>
            <person name="Terryn N."/>
            <person name="Harris B."/>
            <person name="Ansorge W."/>
            <person name="Brandt P."/>
            <person name="Grivell L.A."/>
            <person name="Rieger M."/>
            <person name="Weichselgartner M."/>
            <person name="de Simone V."/>
            <person name="Obermaier B."/>
            <person name="Mache R."/>
            <person name="Mueller M."/>
            <person name="Kreis M."/>
            <person name="Delseny M."/>
            <person name="Puigdomenech P."/>
            <person name="Watson M."/>
            <person name="Schmidtheini T."/>
            <person name="Reichert B."/>
            <person name="Portetelle D."/>
            <person name="Perez-Alonso M."/>
            <person name="Boutry M."/>
            <person name="Bancroft I."/>
            <person name="Vos P."/>
            <person name="Hoheisel J."/>
            <person name="Zimmermann W."/>
            <person name="Wedler H."/>
            <person name="Ridley P."/>
            <person name="Langham S.-A."/>
            <person name="McCullagh B."/>
            <person name="Bilham L."/>
            <person name="Robben J."/>
            <person name="van der Schueren J."/>
            <person name="Grymonprez B."/>
            <person name="Chuang Y.-J."/>
            <person name="Vandenbussche F."/>
            <person name="Braeken M."/>
            <person name="Weltjens I."/>
            <person name="Voet M."/>
            <person name="Bastiaens I."/>
            <person name="Aert R."/>
            <person name="Defoor E."/>
            <person name="Weitzenegger T."/>
            <person name="Bothe G."/>
            <person name="Ramsperger U."/>
            <person name="Hilbert H."/>
            <person name="Braun M."/>
            <person name="Holzer E."/>
            <person name="Brandt A."/>
            <person name="Peters S."/>
            <person name="van Staveren M."/>
            <person name="Dirkse W."/>
            <person name="Mooijman P."/>
            <person name="Klein Lankhorst R."/>
            <person name="Rose M."/>
            <person name="Hauf J."/>
            <person name="Koetter P."/>
            <person name="Berneiser S."/>
            <person name="Hempel S."/>
            <person name="Feldpausch M."/>
            <person name="Lamberth S."/>
            <person name="Van den Daele H."/>
            <person name="De Keyser A."/>
            <person name="Buysshaert C."/>
            <person name="Gielen J."/>
            <person name="Villarroel R."/>
            <person name="De Clercq R."/>
            <person name="van Montagu M."/>
            <person name="Rogers J."/>
            <person name="Cronin A."/>
            <person name="Quail M.A."/>
            <person name="Bray-Allen S."/>
            <person name="Clark L."/>
            <person name="Doggett J."/>
            <person name="Hall S."/>
            <person name="Kay M."/>
            <person name="Lennard N."/>
            <person name="McLay K."/>
            <person name="Mayes R."/>
            <person name="Pettett A."/>
            <person name="Rajandream M.A."/>
            <person name="Lyne M."/>
            <person name="Benes V."/>
            <person name="Rechmann S."/>
            <person name="Borkova D."/>
            <person name="Bloecker H."/>
            <person name="Scharfe M."/>
            <person name="Grimm M."/>
            <person name="Loehnert T.-H."/>
            <person name="Dose S."/>
            <person name="de Haan M."/>
            <person name="Maarse A.C."/>
            <person name="Schaefer M."/>
            <person name="Mueller-Auer S."/>
            <person name="Gabel C."/>
            <person name="Fuchs M."/>
            <person name="Fartmann B."/>
            <person name="Granderath K."/>
            <person name="Dauner D."/>
            <person name="Herzl A."/>
            <person name="Neumann S."/>
            <person name="Argiriou A."/>
            <person name="Vitale D."/>
            <person name="Liguori R."/>
            <person name="Piravandi E."/>
            <person name="Massenet O."/>
            <person name="Quigley F."/>
            <person name="Clabauld G."/>
            <person name="Muendlein A."/>
            <person name="Felber R."/>
            <person name="Schnabl S."/>
            <person name="Hiller R."/>
            <person name="Schmidt W."/>
            <person name="Lecharny A."/>
            <person name="Aubourg S."/>
            <person name="Chefdor F."/>
            <person name="Cooke R."/>
            <person name="Berger C."/>
            <person name="Monfort A."/>
            <person name="Casacuberta E."/>
            <person name="Gibbons T."/>
            <person name="Weber N."/>
            <person name="Vandenbol M."/>
            <person name="Bargues M."/>
            <person name="Terol J."/>
            <person name="Torres A."/>
            <person name="Perez-Perez A."/>
            <person name="Purnelle B."/>
            <person name="Bent E."/>
            <person name="Johnson S."/>
            <person name="Tacon D."/>
            <person name="Jesse T."/>
            <person name="Heijnen L."/>
            <person name="Schwarz S."/>
            <person name="Scholler P."/>
            <person name="Heber S."/>
            <person name="Francs P."/>
            <person name="Bielke C."/>
            <person name="Frishman D."/>
            <person name="Haase D."/>
            <person name="Lemcke K."/>
            <person name="Mewes H.-W."/>
            <person name="Stocker S."/>
            <person name="Zaccaria P."/>
            <person name="Bevan M."/>
            <person name="Wilson R.K."/>
            <person name="de la Bastide M."/>
            <person name="Habermann K."/>
            <person name="Parnell L."/>
            <person name="Dedhia N."/>
            <person name="Gnoj L."/>
            <person name="Schutz K."/>
            <person name="Huang E."/>
            <person name="Spiegel L."/>
            <person name="Sekhon M."/>
            <person name="Murray J."/>
            <person name="Sheet P."/>
            <person name="Cordes M."/>
            <person name="Abu-Threideh J."/>
            <person name="Stoneking T."/>
            <person name="Kalicki J."/>
            <person name="Graves T."/>
            <person name="Harmon G."/>
            <person name="Edwards J."/>
            <person name="Latreille P."/>
            <person name="Courtney L."/>
            <person name="Cloud J."/>
            <person name="Abbott A."/>
            <person name="Scott K."/>
            <person name="Johnson D."/>
            <person name="Minx P."/>
            <person name="Bentley D."/>
            <person name="Fulton B."/>
            <person name="Miller N."/>
            <person name="Greco T."/>
            <person name="Kemp K."/>
            <person name="Kramer J."/>
            <person name="Fulton L."/>
            <person name="Mardis E."/>
            <person name="Dante M."/>
            <person name="Pepin K."/>
            <person name="Hillier L.W."/>
            <person name="Nelson J."/>
            <person name="Spieth J."/>
            <person name="Ryan E."/>
            <person name="Andrews S."/>
            <person name="Geisel C."/>
            <person name="Layman D."/>
            <person name="Du H."/>
            <person name="Ali J."/>
            <person name="Berghoff A."/>
            <person name="Jones K."/>
            <person name="Drone K."/>
            <person name="Cotton M."/>
            <person name="Joshu C."/>
            <person name="Antonoiu B."/>
            <person name="Zidanic M."/>
            <person name="Strong C."/>
            <person name="Sun H."/>
            <person name="Lamar B."/>
            <person name="Yordan C."/>
            <person name="Ma P."/>
            <person name="Zhong J."/>
            <person name="Preston R."/>
            <person name="Vil D."/>
            <person name="Shekher M."/>
            <person name="Matero A."/>
            <person name="Shah R."/>
            <person name="Swaby I.K."/>
            <person name="O'Shaughnessy A."/>
            <person name="Rodriguez M."/>
            <person name="Hoffman J."/>
            <person name="Till S."/>
            <person name="Granat S."/>
            <person name="Shohdy N."/>
            <person name="Hasegawa A."/>
            <person name="Hameed A."/>
            <person name="Lodhi M."/>
            <person name="Johnson A."/>
            <person name="Chen E."/>
            <person name="Marra M.A."/>
            <person name="Martienssen R."/>
            <person name="McCombie W.R."/>
        </authorList>
    </citation>
    <scope>NUCLEOTIDE SEQUENCE [LARGE SCALE GENOMIC DNA]</scope>
    <source>
        <strain>cv. Columbia</strain>
    </source>
</reference>
<reference key="3">
    <citation type="journal article" date="2017" name="Plant J.">
        <title>Araport11: a complete reannotation of the Arabidopsis thaliana reference genome.</title>
        <authorList>
            <person name="Cheng C.Y."/>
            <person name="Krishnakumar V."/>
            <person name="Chan A.P."/>
            <person name="Thibaud-Nissen F."/>
            <person name="Schobel S."/>
            <person name="Town C.D."/>
        </authorList>
    </citation>
    <scope>GENOME REANNOTATION</scope>
    <source>
        <strain>cv. Columbia</strain>
    </source>
</reference>
<reference key="4">
    <citation type="journal article" date="1997" name="J. Plant Physiol.">
        <title>Expression, evolution and genomic complexity of potassium ion channel genes of Arabidopsis thaliana.</title>
        <authorList>
            <person name="Butt A.D."/>
            <person name="Blatt M.R."/>
            <person name="Ainsworth C.C."/>
        </authorList>
    </citation>
    <scope>NUCLEOTIDE SEQUENCE [MRNA] OF 133-697</scope>
    <source>
        <strain>cv. Columbia</strain>
    </source>
</reference>
<reference key="5">
    <citation type="journal article" date="2001" name="Plant Physiol.">
        <title>Phylogenetic relationships within cation transporter families of Arabidopsis.</title>
        <authorList>
            <person name="Maeser P."/>
            <person name="Thomine S."/>
            <person name="Schroeder J.I."/>
            <person name="Ward J.M."/>
            <person name="Hirschi K."/>
            <person name="Sze H."/>
            <person name="Talke I.N."/>
            <person name="Amtmann A."/>
            <person name="Maathuis F.J.M."/>
            <person name="Sanders D."/>
            <person name="Harper J.F."/>
            <person name="Tchieu J."/>
            <person name="Gribskov M."/>
            <person name="Persans M.W."/>
            <person name="Salt D.E."/>
            <person name="Kim S.A."/>
            <person name="Guerinot M.L."/>
        </authorList>
    </citation>
    <scope>GENE FAMILY</scope>
    <scope>NOMENCLATURE</scope>
</reference>
<reference key="6">
    <citation type="journal article" date="2016" name="Plant Cell">
        <title>S-type anion channels SLAC1 and SLAH3 function as essential negative regulators of inward K+ channels and stomatal opening in Arabidopsis.</title>
        <authorList>
            <person name="Zhang A."/>
            <person name="Ren H.M."/>
            <person name="Tan Y.Q."/>
            <person name="Qi G.N."/>
            <person name="Yao F.Y."/>
            <person name="Wu G.L."/>
            <person name="Yang L.W."/>
            <person name="Hussain J."/>
            <person name="Sun S.J."/>
            <person name="Wang Y.F."/>
        </authorList>
    </citation>
    <scope>INTERACTION WITH SLAC1</scope>
</reference>